<accession>Q0UI02</accession>
<proteinExistence type="evidence at protein level"/>
<comment type="function">
    <text evidence="3 6 7 11">Dual O-methyltransferase/FAD-dependent monooxygenase; part of the gene cluster that mediates the biosynthesis of elsinochrome C, a perelyenequinone phytotoxin structurally similar to cercosporin (PubMed:28251756, PubMed:30809363). The first step of elsinochrome C biosynthesis is performed by the polyketide synthase elcA which catalyzes the formation of nor-toralactone (PubMed:28251756, PubMed:30809363). The starter unit acyltransferase (SAT) domain of elcA initiates polyketide extension by the selective utilization of acetyl-CoA, which is elongated to the heptaketide in the beta-ketoacyl synthase (KS) domain by successive condensations with six malonyl units introduced by the malonyl acyltransferase (MAT) domain (By similarity). The product template (PT) domain catalyzes C4-C9 and C2-C11 aldol cyclizations and dehydrations to a trihydroxynaphthalene, which is thought to be delivered to the thioesterase (TE) domain for product release (By similarity). The bifunctional enzyme elcB then methylates nor-toralactone to toralactone before conducting an unusual oxidative aromatic ring opening (PubMed:28251756, PubMed:30809363). The next step in perylenequinone biosynthesis is an O-methylation at the nascent OH-6 of the elcB product performed by the O-methyltransferase elcD (PubMed:30809363). The oxidative coupling of the two monomeric naphthol units in perylenequinone biosynthesis is catalyzed by the FAD-dependent monooxygenase elcE and the multicopper oxidase elcG (PubMed:30809363). ElcG might catalyze the first intermolecular coupling in a regio- and stereo-selective manner via a phenol radical coupling mechanism and the elcE could forge the second C-C bond intramolecularly via a hydride transfer mechanism (PubMed:30809363). The fasciclin domain-containing protein elcF might also play a role duting this step (Probable). The last piece of the puzzle in the biosynthesis of elsinochrome C is the additional annulation by enolate coupling to afford the dihydrobenzo(ghi)perylenequinone system, catalyzed by the FAD-dependent monooxygenase elcH (PubMed:30809363).</text>
</comment>
<comment type="catalytic activity">
    <reaction evidence="7">
        <text>nor-toralactone + S-adenosyl-L-methionine = toralactone + S-adenosyl-L-homocysteine + H(+)</text>
        <dbReference type="Rhea" id="RHEA:62908"/>
        <dbReference type="ChEBI" id="CHEBI:15378"/>
        <dbReference type="ChEBI" id="CHEBI:57856"/>
        <dbReference type="ChEBI" id="CHEBI:59789"/>
        <dbReference type="ChEBI" id="CHEBI:78029"/>
        <dbReference type="ChEBI" id="CHEBI:146018"/>
    </reaction>
    <physiologicalReaction direction="left-to-right" evidence="7">
        <dbReference type="Rhea" id="RHEA:62909"/>
    </physiologicalReaction>
</comment>
<comment type="catalytic activity">
    <reaction evidence="7">
        <text>toralactone + NADH + O2 + H(+) = 1-(3,4,5-trihydroxy-7-methoxynaphthalen-2-yl)propan-2-one + CO2 + NAD(+)</text>
        <dbReference type="Rhea" id="RHEA:62912"/>
        <dbReference type="ChEBI" id="CHEBI:15378"/>
        <dbReference type="ChEBI" id="CHEBI:15379"/>
        <dbReference type="ChEBI" id="CHEBI:16526"/>
        <dbReference type="ChEBI" id="CHEBI:57540"/>
        <dbReference type="ChEBI" id="CHEBI:57945"/>
        <dbReference type="ChEBI" id="CHEBI:78029"/>
        <dbReference type="ChEBI" id="CHEBI:146020"/>
    </reaction>
    <physiologicalReaction direction="left-to-right" evidence="7">
        <dbReference type="Rhea" id="RHEA:62913"/>
    </physiologicalReaction>
</comment>
<comment type="pathway">
    <text evidence="6 7">Secondary metabolite biosynthesis.</text>
</comment>
<comment type="induction">
    <text evidence="6">Expression is up-regulated during the late stage of P.nodorum wheat leaf infection and is controlled by the cluster specific transporter elcR.</text>
</comment>
<comment type="similarity">
    <text evidence="10">In the C-terminal section; belongs to the paxM FAD-dependent monooxygenase family.</text>
</comment>
<comment type="similarity">
    <text evidence="10">In the N-terminal section; belongs to the class I-like SAM-binding methyltransferase superfamily. Cation-independent O-methyltransferase family. COMT subfamily.</text>
</comment>
<gene>
    <name evidence="8" type="primary">elcB</name>
    <name type="ORF">SNOG_08612</name>
</gene>
<organism>
    <name type="scientific">Phaeosphaeria nodorum (strain SN15 / ATCC MYA-4574 / FGSC 10173)</name>
    <name type="common">Glume blotch fungus</name>
    <name type="synonym">Parastagonospora nodorum</name>
    <dbReference type="NCBI Taxonomy" id="321614"/>
    <lineage>
        <taxon>Eukaryota</taxon>
        <taxon>Fungi</taxon>
        <taxon>Dikarya</taxon>
        <taxon>Ascomycota</taxon>
        <taxon>Pezizomycotina</taxon>
        <taxon>Dothideomycetes</taxon>
        <taxon>Pleosporomycetidae</taxon>
        <taxon>Pleosporales</taxon>
        <taxon>Pleosporineae</taxon>
        <taxon>Phaeosphaeriaceae</taxon>
        <taxon>Parastagonospora</taxon>
    </lineage>
</organism>
<name>ELCB_PHANO</name>
<dbReference type="EC" id="2.1.1.-" evidence="7"/>
<dbReference type="EC" id="1.-.-.-" evidence="7"/>
<dbReference type="EMBL" id="CH445337">
    <property type="protein sequence ID" value="EAT83780.2"/>
    <property type="molecule type" value="Genomic_DNA"/>
</dbReference>
<dbReference type="RefSeq" id="XP_001798921.1">
    <property type="nucleotide sequence ID" value="XM_001798869.1"/>
</dbReference>
<dbReference type="SMR" id="Q0UI02"/>
<dbReference type="STRING" id="321614.Q0UI02"/>
<dbReference type="EnsemblFungi" id="SNOT_08612">
    <property type="protein sequence ID" value="SNOT_08612"/>
    <property type="gene ID" value="SNOG_08612"/>
</dbReference>
<dbReference type="GeneID" id="5975820"/>
<dbReference type="KEGG" id="pno:SNOG_08612"/>
<dbReference type="VEuPathDB" id="FungiDB:JI435_086120"/>
<dbReference type="eggNOG" id="KOG2614">
    <property type="taxonomic scope" value="Eukaryota"/>
</dbReference>
<dbReference type="eggNOG" id="KOG3178">
    <property type="taxonomic scope" value="Eukaryota"/>
</dbReference>
<dbReference type="HOGENOM" id="CLU_370883_0_0_1"/>
<dbReference type="InParanoid" id="Q0UI02"/>
<dbReference type="Proteomes" id="UP000001055">
    <property type="component" value="Unassembled WGS sequence"/>
</dbReference>
<dbReference type="GO" id="GO:0071949">
    <property type="term" value="F:FAD binding"/>
    <property type="evidence" value="ECO:0007669"/>
    <property type="project" value="InterPro"/>
</dbReference>
<dbReference type="GO" id="GO:0004497">
    <property type="term" value="F:monooxygenase activity"/>
    <property type="evidence" value="ECO:0007669"/>
    <property type="project" value="UniProtKB-KW"/>
</dbReference>
<dbReference type="GO" id="GO:0008171">
    <property type="term" value="F:O-methyltransferase activity"/>
    <property type="evidence" value="ECO:0007669"/>
    <property type="project" value="InterPro"/>
</dbReference>
<dbReference type="GO" id="GO:0032259">
    <property type="term" value="P:methylation"/>
    <property type="evidence" value="ECO:0007669"/>
    <property type="project" value="UniProtKB-KW"/>
</dbReference>
<dbReference type="GO" id="GO:0044550">
    <property type="term" value="P:secondary metabolite biosynthetic process"/>
    <property type="evidence" value="ECO:0007669"/>
    <property type="project" value="UniProtKB-ARBA"/>
</dbReference>
<dbReference type="Gene3D" id="3.50.50.60">
    <property type="entry name" value="FAD/NAD(P)-binding domain"/>
    <property type="match status" value="1"/>
</dbReference>
<dbReference type="Gene3D" id="3.40.50.150">
    <property type="entry name" value="Vaccinia Virus protein VP39"/>
    <property type="match status" value="1"/>
</dbReference>
<dbReference type="InterPro" id="IPR016461">
    <property type="entry name" value="COMT-like"/>
</dbReference>
<dbReference type="InterPro" id="IPR002938">
    <property type="entry name" value="FAD-bd"/>
</dbReference>
<dbReference type="InterPro" id="IPR036188">
    <property type="entry name" value="FAD/NAD-bd_sf"/>
</dbReference>
<dbReference type="InterPro" id="IPR001077">
    <property type="entry name" value="O_MeTrfase_dom"/>
</dbReference>
<dbReference type="InterPro" id="IPR029063">
    <property type="entry name" value="SAM-dependent_MTases_sf"/>
</dbReference>
<dbReference type="PANTHER" id="PTHR43712:SF19">
    <property type="entry name" value="DUAL O-METHYLTRANSFERASE_FAD-DEPENDENT MONOOXYGENASE ELCB"/>
    <property type="match status" value="1"/>
</dbReference>
<dbReference type="PANTHER" id="PTHR43712">
    <property type="entry name" value="PUTATIVE (AFU_ORTHOLOGUE AFUA_4G14580)-RELATED"/>
    <property type="match status" value="1"/>
</dbReference>
<dbReference type="Pfam" id="PF01494">
    <property type="entry name" value="FAD_binding_3"/>
    <property type="match status" value="2"/>
</dbReference>
<dbReference type="Pfam" id="PF00891">
    <property type="entry name" value="Methyltransf_2"/>
    <property type="match status" value="1"/>
</dbReference>
<dbReference type="PRINTS" id="PR00420">
    <property type="entry name" value="RNGMNOXGNASE"/>
</dbReference>
<dbReference type="SUPFAM" id="SSF51905">
    <property type="entry name" value="FAD/NAD(P)-binding domain"/>
    <property type="match status" value="1"/>
</dbReference>
<dbReference type="SUPFAM" id="SSF53335">
    <property type="entry name" value="S-adenosyl-L-methionine-dependent methyltransferases"/>
    <property type="match status" value="1"/>
</dbReference>
<dbReference type="PROSITE" id="PS51683">
    <property type="entry name" value="SAM_OMT_II"/>
    <property type="match status" value="1"/>
</dbReference>
<protein>
    <recommendedName>
        <fullName evidence="8">Dual O-methyltransferase/FAD-dependent monooxygenase elcB</fullName>
    </recommendedName>
    <alternativeName>
        <fullName evidence="8">Elsinochrome C biosynthesis cluster protein B</fullName>
    </alternativeName>
    <domain>
        <recommendedName>
            <fullName evidence="9">O-methyltransferase</fullName>
            <ecNumber evidence="7">2.1.1.-</ecNumber>
        </recommendedName>
    </domain>
    <domain>
        <recommendedName>
            <fullName evidence="9">FAD-dependent monooxygenase</fullName>
            <ecNumber evidence="7">1.-.-.-</ecNumber>
        </recommendedName>
    </domain>
</protein>
<feature type="chain" id="PRO_0000449857" description="Dual O-methyltransferase/FAD-dependent monooxygenase elcB">
    <location>
        <begin position="1"/>
        <end position="931"/>
    </location>
</feature>
<feature type="region of interest" description="O-methyltransferase" evidence="2">
    <location>
        <begin position="1"/>
        <end position="463"/>
    </location>
</feature>
<feature type="region of interest" description="Disordered" evidence="5">
    <location>
        <begin position="455"/>
        <end position="474"/>
    </location>
</feature>
<feature type="region of interest" description="FAD-dependent monooxygenase" evidence="2">
    <location>
        <begin position="464"/>
        <end position="931"/>
    </location>
</feature>
<feature type="compositionally biased region" description="Polar residues" evidence="5">
    <location>
        <begin position="462"/>
        <end position="474"/>
    </location>
</feature>
<feature type="active site" description="Proton acceptor" evidence="4">
    <location>
        <position position="304"/>
    </location>
</feature>
<feature type="binding site" evidence="4">
    <location>
        <position position="254"/>
    </location>
    <ligand>
        <name>S-adenosyl-L-methionine</name>
        <dbReference type="ChEBI" id="CHEBI:59789"/>
    </ligand>
</feature>
<feature type="binding site" evidence="1">
    <location>
        <position position="520"/>
    </location>
    <ligand>
        <name>FAD</name>
        <dbReference type="ChEBI" id="CHEBI:57692"/>
    </ligand>
</feature>
<feature type="binding site" evidence="1">
    <location>
        <position position="604"/>
    </location>
    <ligand>
        <name>FAD</name>
        <dbReference type="ChEBI" id="CHEBI:57692"/>
    </ligand>
</feature>
<feature type="binding site" evidence="1">
    <location>
        <position position="836"/>
    </location>
    <ligand>
        <name>FAD</name>
        <dbReference type="ChEBI" id="CHEBI:57692"/>
    </ligand>
</feature>
<feature type="binding site" evidence="1">
    <location>
        <position position="849"/>
    </location>
    <ligand>
        <name>FAD</name>
        <dbReference type="ChEBI" id="CHEBI:57692"/>
    </ligand>
</feature>
<evidence type="ECO:0000250" key="1">
    <source>
        <dbReference type="UniProtKB" id="B8M9J8"/>
    </source>
</evidence>
<evidence type="ECO:0000250" key="2">
    <source>
        <dbReference type="UniProtKB" id="Q2I0M6"/>
    </source>
</evidence>
<evidence type="ECO:0000250" key="3">
    <source>
        <dbReference type="UniProtKB" id="Q6DQW3"/>
    </source>
</evidence>
<evidence type="ECO:0000255" key="4">
    <source>
        <dbReference type="PROSITE-ProRule" id="PRU01020"/>
    </source>
</evidence>
<evidence type="ECO:0000256" key="5">
    <source>
        <dbReference type="SAM" id="MobiDB-lite"/>
    </source>
</evidence>
<evidence type="ECO:0000269" key="6">
    <source>
    </source>
</evidence>
<evidence type="ECO:0000269" key="7">
    <source>
    </source>
</evidence>
<evidence type="ECO:0000303" key="8">
    <source>
    </source>
</evidence>
<evidence type="ECO:0000303" key="9">
    <source>
    </source>
</evidence>
<evidence type="ECO:0000305" key="10"/>
<evidence type="ECO:0000305" key="11">
    <source>
    </source>
</evidence>
<reference key="1">
    <citation type="journal article" date="2007" name="Plant Cell">
        <title>Dothideomycete-plant interactions illuminated by genome sequencing and EST analysis of the wheat pathogen Stagonospora nodorum.</title>
        <authorList>
            <person name="Hane J.K."/>
            <person name="Lowe R.G.T."/>
            <person name="Solomon P.S."/>
            <person name="Tan K.-C."/>
            <person name="Schoch C.L."/>
            <person name="Spatafora J.W."/>
            <person name="Crous P.W."/>
            <person name="Kodira C.D."/>
            <person name="Birren B.W."/>
            <person name="Galagan J.E."/>
            <person name="Torriani S.F.F."/>
            <person name="McDonald B.A."/>
            <person name="Oliver R.P."/>
        </authorList>
    </citation>
    <scope>NUCLEOTIDE SEQUENCE [LARGE SCALE GENOMIC DNA]</scope>
    <source>
        <strain>SN15 / ATCC MYA-4574 / FGSC 10173</strain>
    </source>
</reference>
<reference key="2">
    <citation type="journal article" date="2017" name="Environ. Microbiol.">
        <title>Functional genomics-guided discovery of a light-activated phytotoxin in the wheat pathogen Parastagonospora nodorum via pathway activation.</title>
        <authorList>
            <person name="Chooi Y.H."/>
            <person name="Zhang G."/>
            <person name="Hu J."/>
            <person name="Muria-Gonzalez M.J."/>
            <person name="Tran P.N."/>
            <person name="Pettitt A."/>
            <person name="Maier A.G."/>
            <person name="Barrow R.A."/>
            <person name="Solomon P.S."/>
        </authorList>
    </citation>
    <scope>INDUCTION</scope>
    <scope>FUNCTION</scope>
    <scope>PATHWAY</scope>
</reference>
<reference key="3">
    <citation type="journal article" date="2019" name="Chem. Sci.">
        <title>Heterologous biosynthesis of elsinochrome A sheds light on the formation of the photosensitive perylenequinone system.</title>
        <authorList>
            <person name="Hu J."/>
            <person name="Sarrami F."/>
            <person name="Li H."/>
            <person name="Zhang G."/>
            <person name="Stubbs K.A."/>
            <person name="Lacey E."/>
            <person name="Stewart S.G."/>
            <person name="Karton A."/>
            <person name="Piggott A.M."/>
            <person name="Chooi Y.H."/>
        </authorList>
    </citation>
    <scope>FUNCTION</scope>
    <scope>CATALYTIC ACTIVITY</scope>
    <scope>PATHWAY</scope>
</reference>
<keyword id="KW-0274">FAD</keyword>
<keyword id="KW-0285">Flavoprotein</keyword>
<keyword id="KW-0489">Methyltransferase</keyword>
<keyword id="KW-0503">Monooxygenase</keyword>
<keyword id="KW-0511">Multifunctional enzyme</keyword>
<keyword id="KW-0520">NAD</keyword>
<keyword id="KW-0560">Oxidoreductase</keyword>
<keyword id="KW-0949">S-adenosyl-L-methionine</keyword>
<keyword id="KW-0808">Transferase</keyword>
<sequence length="931" mass="100892">MAASTGLSTVLKEIVQVCREVESHLATESHLDSGEGAPGKNTFPIGLEGPRKQLANAAAQLSQLVTDPREYLEQLSANHGSIAYTDLANRASVPESQLKSVLRMTAAHGFLAEVTPLEISHSPTSALIATNPSFYDWARWLTNYSVPSAYHFADATQKWGRTEVKNETAFNIAMNVEVPFFGYLKENAKMNSMFSSYMRNVASSEATSFKHMISGFDWGGLTPGSKVIDVGGSGGHGSRALASAFPGLNFVVQDLPDTIENAKAALNTDESKLHADRVRFMSHDFFTPQPVVDGDIYFLRMIIHDWPDETAITILAHLRDALKKPGARIVIMDTILPQPGTVSLLQERQLRVRDLTMMQVFNAKEREYDTWKALVEKVGLRIIHVEQPEGSNMGLLELGLADATDLKAGGNARLVFNGNMKTPSVNLNINGASTINEFAHGSTPETFAVNGIHTTDKARPNGDTTHSGQASIPNGVSARISTRPMYARDVLPVLIIGAGISGLCLAQYLHKHAIPFVVFERDPSSEHRPQGYRLKLEADAAAALRESLTAEVYSAFEASCAESAIGETDFDPISGACIKSRAGGGLAGAQGLRASYTVDRTVFRRILMTGISDKIYFGREITRYDICEDNVQSYVVATFKDGATAEGRFLVGADGTRSAIRKQLVPEHKFLDTGATCIYGKTVMTPELLARYPARALRWMTVVADRAPLIQSILIGESPLTLLSEPIRFSRDEPTASLPEDYVYWVLIGRRELFTDATNTSASSTGHGVNSDKAYNTESAQASAAQSLALTEEWHPSLRSLFELQDVSQASTMRVVSAPPKLPVWPSNSCVTLLGDAVHAMSPCGGVGANVALRDAAELGKVFASTAASNEEDAIQSVGGKASDQHDMAQQIASFEGELRKRAFGGIMRSFVGSKAMFGQRTFEELDVAEL</sequence>